<gene>
    <name evidence="1" type="primary">mutS2</name>
    <name evidence="1" type="synonym">rqcU</name>
    <name type="ordered locus">Athe_1642</name>
</gene>
<feature type="chain" id="PRO_1000192209" description="Endonuclease MutS2">
    <location>
        <begin position="1"/>
        <end position="787"/>
    </location>
</feature>
<feature type="domain" description="Smr" evidence="1">
    <location>
        <begin position="711"/>
        <end position="786"/>
    </location>
</feature>
<feature type="binding site" evidence="1">
    <location>
        <begin position="331"/>
        <end position="338"/>
    </location>
    <ligand>
        <name>ATP</name>
        <dbReference type="ChEBI" id="CHEBI:30616"/>
    </ligand>
</feature>
<comment type="function">
    <text evidence="1">Endonuclease that is involved in the suppression of homologous recombination and thus may have a key role in the control of bacterial genetic diversity.</text>
</comment>
<comment type="function">
    <text evidence="1">Acts as a ribosome collision sensor, splitting the ribosome into its 2 subunits. Detects stalled/collided 70S ribosomes which it binds and splits by an ATP-hydrolysis driven conformational change. Acts upstream of the ribosome quality control system (RQC), a ribosome-associated complex that mediates the extraction of incompletely synthesized nascent chains from stalled ribosomes and their subsequent degradation. Probably generates substrates for RQC.</text>
</comment>
<comment type="subunit">
    <text evidence="1">Homodimer. Binds to stalled ribosomes, contacting rRNA.</text>
</comment>
<comment type="similarity">
    <text evidence="1">Belongs to the DNA mismatch repair MutS family. MutS2 subfamily.</text>
</comment>
<proteinExistence type="inferred from homology"/>
<dbReference type="EC" id="3.1.-.-" evidence="1"/>
<dbReference type="EC" id="3.6.4.-" evidence="1"/>
<dbReference type="EMBL" id="CP001393">
    <property type="protein sequence ID" value="ACM60736.1"/>
    <property type="molecule type" value="Genomic_DNA"/>
</dbReference>
<dbReference type="RefSeq" id="WP_015908069.1">
    <property type="nucleotide sequence ID" value="NC_012034.1"/>
</dbReference>
<dbReference type="SMR" id="B9MK78"/>
<dbReference type="STRING" id="521460.Athe_1642"/>
<dbReference type="GeneID" id="31772991"/>
<dbReference type="KEGG" id="ate:Athe_1642"/>
<dbReference type="eggNOG" id="COG1193">
    <property type="taxonomic scope" value="Bacteria"/>
</dbReference>
<dbReference type="HOGENOM" id="CLU_011252_2_1_9"/>
<dbReference type="Proteomes" id="UP000007723">
    <property type="component" value="Chromosome"/>
</dbReference>
<dbReference type="GO" id="GO:0005524">
    <property type="term" value="F:ATP binding"/>
    <property type="evidence" value="ECO:0007669"/>
    <property type="project" value="UniProtKB-UniRule"/>
</dbReference>
<dbReference type="GO" id="GO:0016887">
    <property type="term" value="F:ATP hydrolysis activity"/>
    <property type="evidence" value="ECO:0007669"/>
    <property type="project" value="InterPro"/>
</dbReference>
<dbReference type="GO" id="GO:0140664">
    <property type="term" value="F:ATP-dependent DNA damage sensor activity"/>
    <property type="evidence" value="ECO:0007669"/>
    <property type="project" value="InterPro"/>
</dbReference>
<dbReference type="GO" id="GO:0004519">
    <property type="term" value="F:endonuclease activity"/>
    <property type="evidence" value="ECO:0007669"/>
    <property type="project" value="UniProtKB-UniRule"/>
</dbReference>
<dbReference type="GO" id="GO:0030983">
    <property type="term" value="F:mismatched DNA binding"/>
    <property type="evidence" value="ECO:0007669"/>
    <property type="project" value="InterPro"/>
</dbReference>
<dbReference type="GO" id="GO:0043023">
    <property type="term" value="F:ribosomal large subunit binding"/>
    <property type="evidence" value="ECO:0007669"/>
    <property type="project" value="UniProtKB-UniRule"/>
</dbReference>
<dbReference type="GO" id="GO:0019843">
    <property type="term" value="F:rRNA binding"/>
    <property type="evidence" value="ECO:0007669"/>
    <property type="project" value="UniProtKB-UniRule"/>
</dbReference>
<dbReference type="GO" id="GO:0006298">
    <property type="term" value="P:mismatch repair"/>
    <property type="evidence" value="ECO:0007669"/>
    <property type="project" value="InterPro"/>
</dbReference>
<dbReference type="GO" id="GO:0045910">
    <property type="term" value="P:negative regulation of DNA recombination"/>
    <property type="evidence" value="ECO:0007669"/>
    <property type="project" value="InterPro"/>
</dbReference>
<dbReference type="GO" id="GO:0072344">
    <property type="term" value="P:rescue of stalled ribosome"/>
    <property type="evidence" value="ECO:0007669"/>
    <property type="project" value="UniProtKB-UniRule"/>
</dbReference>
<dbReference type="CDD" id="cd03280">
    <property type="entry name" value="ABC_MutS2"/>
    <property type="match status" value="1"/>
</dbReference>
<dbReference type="CDD" id="cd06503">
    <property type="entry name" value="ATP-synt_Fo_b"/>
    <property type="match status" value="1"/>
</dbReference>
<dbReference type="FunFam" id="3.40.50.300:FF:000830">
    <property type="entry name" value="Endonuclease MutS2"/>
    <property type="match status" value="1"/>
</dbReference>
<dbReference type="Gene3D" id="3.30.1370.110">
    <property type="match status" value="1"/>
</dbReference>
<dbReference type="Gene3D" id="3.40.50.300">
    <property type="entry name" value="P-loop containing nucleotide triphosphate hydrolases"/>
    <property type="match status" value="1"/>
</dbReference>
<dbReference type="HAMAP" id="MF_00092">
    <property type="entry name" value="MutS2"/>
    <property type="match status" value="1"/>
</dbReference>
<dbReference type="InterPro" id="IPR000432">
    <property type="entry name" value="DNA_mismatch_repair_MutS_C"/>
</dbReference>
<dbReference type="InterPro" id="IPR007696">
    <property type="entry name" value="DNA_mismatch_repair_MutS_core"/>
</dbReference>
<dbReference type="InterPro" id="IPR036187">
    <property type="entry name" value="DNA_mismatch_repair_MutS_sf"/>
</dbReference>
<dbReference type="InterPro" id="IPR046893">
    <property type="entry name" value="MSSS"/>
</dbReference>
<dbReference type="InterPro" id="IPR045076">
    <property type="entry name" value="MutS"/>
</dbReference>
<dbReference type="InterPro" id="IPR005747">
    <property type="entry name" value="MutS2"/>
</dbReference>
<dbReference type="InterPro" id="IPR027417">
    <property type="entry name" value="P-loop_NTPase"/>
</dbReference>
<dbReference type="InterPro" id="IPR002625">
    <property type="entry name" value="Smr_dom"/>
</dbReference>
<dbReference type="InterPro" id="IPR036063">
    <property type="entry name" value="Smr_dom_sf"/>
</dbReference>
<dbReference type="NCBIfam" id="TIGR01069">
    <property type="entry name" value="mutS2"/>
    <property type="match status" value="1"/>
</dbReference>
<dbReference type="PANTHER" id="PTHR48466:SF2">
    <property type="entry name" value="OS10G0509000 PROTEIN"/>
    <property type="match status" value="1"/>
</dbReference>
<dbReference type="PANTHER" id="PTHR48466">
    <property type="entry name" value="OS10G0509000 PROTEIN-RELATED"/>
    <property type="match status" value="1"/>
</dbReference>
<dbReference type="Pfam" id="PF20297">
    <property type="entry name" value="MSSS"/>
    <property type="match status" value="1"/>
</dbReference>
<dbReference type="Pfam" id="PF00488">
    <property type="entry name" value="MutS_V"/>
    <property type="match status" value="1"/>
</dbReference>
<dbReference type="Pfam" id="PF01713">
    <property type="entry name" value="Smr"/>
    <property type="match status" value="1"/>
</dbReference>
<dbReference type="PIRSF" id="PIRSF005814">
    <property type="entry name" value="MutS_YshD"/>
    <property type="match status" value="1"/>
</dbReference>
<dbReference type="SMART" id="SM00534">
    <property type="entry name" value="MUTSac"/>
    <property type="match status" value="1"/>
</dbReference>
<dbReference type="SMART" id="SM00533">
    <property type="entry name" value="MUTSd"/>
    <property type="match status" value="1"/>
</dbReference>
<dbReference type="SMART" id="SM00463">
    <property type="entry name" value="SMR"/>
    <property type="match status" value="1"/>
</dbReference>
<dbReference type="SUPFAM" id="SSF48334">
    <property type="entry name" value="DNA repair protein MutS, domain III"/>
    <property type="match status" value="1"/>
</dbReference>
<dbReference type="SUPFAM" id="SSF52540">
    <property type="entry name" value="P-loop containing nucleoside triphosphate hydrolases"/>
    <property type="match status" value="1"/>
</dbReference>
<dbReference type="SUPFAM" id="SSF160443">
    <property type="entry name" value="SMR domain-like"/>
    <property type="match status" value="1"/>
</dbReference>
<dbReference type="PROSITE" id="PS00486">
    <property type="entry name" value="DNA_MISMATCH_REPAIR_2"/>
    <property type="match status" value="1"/>
</dbReference>
<dbReference type="PROSITE" id="PS50828">
    <property type="entry name" value="SMR"/>
    <property type="match status" value="1"/>
</dbReference>
<reference key="1">
    <citation type="submission" date="2009-01" db="EMBL/GenBank/DDBJ databases">
        <title>Complete sequence of chromosome of Caldicellulosiruptor becscii DSM 6725.</title>
        <authorList>
            <person name="Lucas S."/>
            <person name="Copeland A."/>
            <person name="Lapidus A."/>
            <person name="Glavina del Rio T."/>
            <person name="Tice H."/>
            <person name="Bruce D."/>
            <person name="Goodwin L."/>
            <person name="Pitluck S."/>
            <person name="Sims D."/>
            <person name="Meincke L."/>
            <person name="Brettin T."/>
            <person name="Detter J.C."/>
            <person name="Han C."/>
            <person name="Larimer F."/>
            <person name="Land M."/>
            <person name="Hauser L."/>
            <person name="Kyrpides N."/>
            <person name="Ovchinnikova G."/>
            <person name="Kataeva I."/>
            <person name="Adams M.W.W."/>
        </authorList>
    </citation>
    <scope>NUCLEOTIDE SEQUENCE [LARGE SCALE GENOMIC DNA]</scope>
    <source>
        <strain>ATCC BAA-1888 / DSM 6725 / KCTC 15123 / Z-1320</strain>
    </source>
</reference>
<sequence>MNQKTLKALEYDKIVEILKNMAKSTPAKEYFENLIPSTNVADIENELNKVDESYRYVLKYGNLPTLEFENILPSLKKSKLGATLNPHEILQIGKVLKLSYEMRTYLSFTQDFSFLESMKKRLVNLKEVISRIDQTFLTPDEILDTASSKLKEIRDKIRKLENKIRDELNSMIRDPKIQRFLQEPIITIRGEKLLLPVKAEFRNEVKGIVHDQSATGATLFVEPFVCVEISNQIKILKNQEKEEIERILQEISSLIASYCEVIETSFYALVELDIVFTKAIWAKEMNASKPIINASGIINLKKARHPLIQKDKVVPIDIHLGKDFDVLIITGPNTGGKTVTLKTVGLFCLLCQSGIFIPADEGSELCIFQKIFADIGDDQSIVQSLSTFSAHMKNIIEITKNADDKTLVLLDEIGAGTDPEEGAALAKAILKYLSEKGSKVIATTHYGELKIFAQQEDRFENASCEFDVKTLKPTYRLLIGIPGRSNALVISSNLGLDKGIVEMARGYLSQKTIDLDRIINEMEQKRKEAEENLELAQKLKHEAQALKAAYEEEKKRFETERERIRKKAINEAKEIVESSQYEIENLFKDLRKLAENLKEKEVLKELEEKKREYERLIQSISQQVKQEAESKTKKTIQNLRLGQKVYVRSFDAEGFVESLPDSKGNLTVQIGIMKINVNLSDIEEVEGQDSKIYQIASRNVIIKEKNIDMSIDVRGKTSDDAILEVDKYLDDAYTAGLKQVTIIHGKGTGVLRQAIRNFLRRHPHVKSFRDGTYGEGEQGVTVVELKD</sequence>
<name>MUTS2_CALBD</name>
<protein>
    <recommendedName>
        <fullName evidence="1">Endonuclease MutS2</fullName>
        <ecNumber evidence="1">3.1.-.-</ecNumber>
    </recommendedName>
    <alternativeName>
        <fullName evidence="1">Ribosome-associated protein quality control-upstream factor</fullName>
        <shortName evidence="1">RQC-upstream factor</shortName>
        <shortName evidence="1">RqcU</shortName>
        <ecNumber evidence="1">3.6.4.-</ecNumber>
    </alternativeName>
</protein>
<evidence type="ECO:0000255" key="1">
    <source>
        <dbReference type="HAMAP-Rule" id="MF_00092"/>
    </source>
</evidence>
<organism>
    <name type="scientific">Caldicellulosiruptor bescii (strain ATCC BAA-1888 / DSM 6725 / KCTC 15123 / Z-1320)</name>
    <name type="common">Anaerocellum thermophilum</name>
    <dbReference type="NCBI Taxonomy" id="521460"/>
    <lineage>
        <taxon>Bacteria</taxon>
        <taxon>Bacillati</taxon>
        <taxon>Bacillota</taxon>
        <taxon>Bacillota incertae sedis</taxon>
        <taxon>Caldicellulosiruptorales</taxon>
        <taxon>Caldicellulosiruptoraceae</taxon>
        <taxon>Caldicellulosiruptor</taxon>
    </lineage>
</organism>
<accession>B9MK78</accession>
<keyword id="KW-0067">ATP-binding</keyword>
<keyword id="KW-0238">DNA-binding</keyword>
<keyword id="KW-0255">Endonuclease</keyword>
<keyword id="KW-0378">Hydrolase</keyword>
<keyword id="KW-0540">Nuclease</keyword>
<keyword id="KW-0547">Nucleotide-binding</keyword>
<keyword id="KW-0694">RNA-binding</keyword>
<keyword id="KW-0699">rRNA-binding</keyword>